<accession>Q9A713</accession>
<organism>
    <name type="scientific">Caulobacter vibrioides (strain ATCC 19089 / CIP 103742 / CB 15)</name>
    <name type="common">Caulobacter crescentus</name>
    <dbReference type="NCBI Taxonomy" id="190650"/>
    <lineage>
        <taxon>Bacteria</taxon>
        <taxon>Pseudomonadati</taxon>
        <taxon>Pseudomonadota</taxon>
        <taxon>Alphaproteobacteria</taxon>
        <taxon>Caulobacterales</taxon>
        <taxon>Caulobacteraceae</taxon>
        <taxon>Caulobacter</taxon>
    </lineage>
</organism>
<dbReference type="EC" id="2.3.1.191" evidence="1"/>
<dbReference type="EMBL" id="AE005673">
    <property type="protein sequence ID" value="AAK23888.1"/>
    <property type="molecule type" value="Genomic_DNA"/>
</dbReference>
<dbReference type="PIR" id="D87486">
    <property type="entry name" value="D87486"/>
</dbReference>
<dbReference type="RefSeq" id="NP_420720.1">
    <property type="nucleotide sequence ID" value="NC_002696.2"/>
</dbReference>
<dbReference type="RefSeq" id="WP_010919779.1">
    <property type="nucleotide sequence ID" value="NC_002696.2"/>
</dbReference>
<dbReference type="SMR" id="Q9A713"/>
<dbReference type="STRING" id="190650.CC_1913"/>
<dbReference type="EnsemblBacteria" id="AAK23888">
    <property type="protein sequence ID" value="AAK23888"/>
    <property type="gene ID" value="CC_1913"/>
</dbReference>
<dbReference type="KEGG" id="ccr:CC_1913"/>
<dbReference type="PATRIC" id="fig|190650.5.peg.1930"/>
<dbReference type="eggNOG" id="COG1044">
    <property type="taxonomic scope" value="Bacteria"/>
</dbReference>
<dbReference type="HOGENOM" id="CLU_049865_0_2_5"/>
<dbReference type="BioCyc" id="CAULO:CC1913-MONOMER"/>
<dbReference type="UniPathway" id="UPA00973"/>
<dbReference type="Proteomes" id="UP000001816">
    <property type="component" value="Chromosome"/>
</dbReference>
<dbReference type="GO" id="GO:0016020">
    <property type="term" value="C:membrane"/>
    <property type="evidence" value="ECO:0007669"/>
    <property type="project" value="GOC"/>
</dbReference>
<dbReference type="GO" id="GO:0016410">
    <property type="term" value="F:N-acyltransferase activity"/>
    <property type="evidence" value="ECO:0007669"/>
    <property type="project" value="InterPro"/>
</dbReference>
<dbReference type="GO" id="GO:0009245">
    <property type="term" value="P:lipid A biosynthetic process"/>
    <property type="evidence" value="ECO:0007669"/>
    <property type="project" value="UniProtKB-UniRule"/>
</dbReference>
<dbReference type="CDD" id="cd03352">
    <property type="entry name" value="LbH_LpxD"/>
    <property type="match status" value="1"/>
</dbReference>
<dbReference type="Gene3D" id="2.160.10.10">
    <property type="entry name" value="Hexapeptide repeat proteins"/>
    <property type="match status" value="1"/>
</dbReference>
<dbReference type="Gene3D" id="3.40.1390.10">
    <property type="entry name" value="MurE/MurF, N-terminal domain"/>
    <property type="match status" value="1"/>
</dbReference>
<dbReference type="HAMAP" id="MF_00523">
    <property type="entry name" value="LpxD"/>
    <property type="match status" value="1"/>
</dbReference>
<dbReference type="InterPro" id="IPR001451">
    <property type="entry name" value="Hexapep"/>
</dbReference>
<dbReference type="InterPro" id="IPR018357">
    <property type="entry name" value="Hexapep_transf_CS"/>
</dbReference>
<dbReference type="InterPro" id="IPR007691">
    <property type="entry name" value="LpxD"/>
</dbReference>
<dbReference type="InterPro" id="IPR011004">
    <property type="entry name" value="Trimer_LpxA-like_sf"/>
</dbReference>
<dbReference type="InterPro" id="IPR020573">
    <property type="entry name" value="UDP_GlcNAc_AcTrfase_non-rep"/>
</dbReference>
<dbReference type="NCBIfam" id="TIGR01853">
    <property type="entry name" value="lipid_A_lpxD"/>
    <property type="match status" value="1"/>
</dbReference>
<dbReference type="NCBIfam" id="NF002060">
    <property type="entry name" value="PRK00892.1"/>
    <property type="match status" value="1"/>
</dbReference>
<dbReference type="PANTHER" id="PTHR43378">
    <property type="entry name" value="UDP-3-O-ACYLGLUCOSAMINE N-ACYLTRANSFERASE"/>
    <property type="match status" value="1"/>
</dbReference>
<dbReference type="PANTHER" id="PTHR43378:SF2">
    <property type="entry name" value="UDP-3-O-ACYLGLUCOSAMINE N-ACYLTRANSFERASE 1, MITOCHONDRIAL-RELATED"/>
    <property type="match status" value="1"/>
</dbReference>
<dbReference type="Pfam" id="PF00132">
    <property type="entry name" value="Hexapep"/>
    <property type="match status" value="2"/>
</dbReference>
<dbReference type="Pfam" id="PF04613">
    <property type="entry name" value="LpxD"/>
    <property type="match status" value="1"/>
</dbReference>
<dbReference type="SUPFAM" id="SSF51161">
    <property type="entry name" value="Trimeric LpxA-like enzymes"/>
    <property type="match status" value="1"/>
</dbReference>
<dbReference type="PROSITE" id="PS00101">
    <property type="entry name" value="HEXAPEP_TRANSFERASES"/>
    <property type="match status" value="2"/>
</dbReference>
<protein>
    <recommendedName>
        <fullName evidence="1">UDP-3-O-acylglucosamine N-acyltransferase</fullName>
        <ecNumber evidence="1">2.3.1.191</ecNumber>
    </recommendedName>
</protein>
<name>LPXD_CAUVC</name>
<feature type="chain" id="PRO_0000059660" description="UDP-3-O-acylglucosamine N-acyltransferase">
    <location>
        <begin position="1"/>
        <end position="339"/>
    </location>
</feature>
<feature type="active site" description="Proton acceptor" evidence="1">
    <location>
        <position position="248"/>
    </location>
</feature>
<gene>
    <name evidence="1" type="primary">lpxD</name>
    <name type="ordered locus">CC_1913</name>
</gene>
<keyword id="KW-0012">Acyltransferase</keyword>
<keyword id="KW-0441">Lipid A biosynthesis</keyword>
<keyword id="KW-0444">Lipid biosynthesis</keyword>
<keyword id="KW-0443">Lipid metabolism</keyword>
<keyword id="KW-1185">Reference proteome</keyword>
<keyword id="KW-0677">Repeat</keyword>
<keyword id="KW-0808">Transferase</keyword>
<comment type="function">
    <text evidence="1">Catalyzes the N-acylation of UDP-3-O-acylglucosamine using 3-hydroxyacyl-ACP as the acyl donor. Is involved in the biosynthesis of lipid A, a phosphorylated glycolipid that anchors the lipopolysaccharide to the outer membrane of the cell.</text>
</comment>
<comment type="catalytic activity">
    <reaction evidence="1">
        <text>a UDP-3-O-[(3R)-3-hydroxyacyl]-alpha-D-glucosamine + a (3R)-hydroxyacyl-[ACP] = a UDP-2-N,3-O-bis[(3R)-3-hydroxyacyl]-alpha-D-glucosamine + holo-[ACP] + H(+)</text>
        <dbReference type="Rhea" id="RHEA:53836"/>
        <dbReference type="Rhea" id="RHEA-COMP:9685"/>
        <dbReference type="Rhea" id="RHEA-COMP:9945"/>
        <dbReference type="ChEBI" id="CHEBI:15378"/>
        <dbReference type="ChEBI" id="CHEBI:64479"/>
        <dbReference type="ChEBI" id="CHEBI:78827"/>
        <dbReference type="ChEBI" id="CHEBI:137740"/>
        <dbReference type="ChEBI" id="CHEBI:137748"/>
        <dbReference type="EC" id="2.3.1.191"/>
    </reaction>
</comment>
<comment type="pathway">
    <text evidence="1">Bacterial outer membrane biogenesis; LPS lipid A biosynthesis.</text>
</comment>
<comment type="subunit">
    <text evidence="1">Homotrimer.</text>
</comment>
<comment type="similarity">
    <text evidence="1">Belongs to the transferase hexapeptide repeat family. LpxD subfamily.</text>
</comment>
<proteinExistence type="inferred from homology"/>
<evidence type="ECO:0000255" key="1">
    <source>
        <dbReference type="HAMAP-Rule" id="MF_00523"/>
    </source>
</evidence>
<reference key="1">
    <citation type="journal article" date="2001" name="Proc. Natl. Acad. Sci. U.S.A.">
        <title>Complete genome sequence of Caulobacter crescentus.</title>
        <authorList>
            <person name="Nierman W.C."/>
            <person name="Feldblyum T.V."/>
            <person name="Laub M.T."/>
            <person name="Paulsen I.T."/>
            <person name="Nelson K.E."/>
            <person name="Eisen J.A."/>
            <person name="Heidelberg J.F."/>
            <person name="Alley M.R.K."/>
            <person name="Ohta N."/>
            <person name="Maddock J.R."/>
            <person name="Potocka I."/>
            <person name="Nelson W.C."/>
            <person name="Newton A."/>
            <person name="Stephens C."/>
            <person name="Phadke N.D."/>
            <person name="Ely B."/>
            <person name="DeBoy R.T."/>
            <person name="Dodson R.J."/>
            <person name="Durkin A.S."/>
            <person name="Gwinn M.L."/>
            <person name="Haft D.H."/>
            <person name="Kolonay J.F."/>
            <person name="Smit J."/>
            <person name="Craven M.B."/>
            <person name="Khouri H.M."/>
            <person name="Shetty J."/>
            <person name="Berry K.J."/>
            <person name="Utterback T.R."/>
            <person name="Tran K."/>
            <person name="Wolf A.M."/>
            <person name="Vamathevan J.J."/>
            <person name="Ermolaeva M.D."/>
            <person name="White O."/>
            <person name="Salzberg S.L."/>
            <person name="Venter J.C."/>
            <person name="Shapiro L."/>
            <person name="Fraser C.M."/>
        </authorList>
    </citation>
    <scope>NUCLEOTIDE SEQUENCE [LARGE SCALE GENOMIC DNA]</scope>
    <source>
        <strain>ATCC 19089 / CIP 103742 / CB 15</strain>
    </source>
</reference>
<sequence>MPDPRFFDSLGPALLSELAQAGAATLADAALGERVITHAAPLDASDAQAITFFSDAKRKDAAASTRAGACFVRPEHQGFLPPTCAALVTGRPQAAWAAAANRLHAPRRHEAGAPSLHPDAALEDGVALAPNVTIGQGASIGRGTRIGPGVVIGPGVVIGRYCRIGANAVIGFAMLGDNVAISAGAVIGEAGFGAALGPRGMVDLPQLGRVVIQDNVTLGANSCVDRGAFGDTTIGENTKIDNLVHVAHNVRIGRNCVLAAYTGVSGSTVVGDGVAFGGKAGVADHLNIGSGASIGAAASVFKDVPDGETWTGFPARPLKRWLRETAWLSRMAGGRGTRG</sequence>